<comment type="function">
    <text evidence="2">GTP hydrolase that promotes the GTP-dependent binding of aminoacyl-tRNA to the A-site of ribosomes during protein biosynthesis.</text>
</comment>
<comment type="catalytic activity">
    <reaction evidence="2">
        <text>GTP + H2O = GDP + phosphate + H(+)</text>
        <dbReference type="Rhea" id="RHEA:19669"/>
        <dbReference type="ChEBI" id="CHEBI:15377"/>
        <dbReference type="ChEBI" id="CHEBI:15378"/>
        <dbReference type="ChEBI" id="CHEBI:37565"/>
        <dbReference type="ChEBI" id="CHEBI:43474"/>
        <dbReference type="ChEBI" id="CHEBI:58189"/>
        <dbReference type="EC" id="3.6.5.3"/>
    </reaction>
    <physiologicalReaction direction="left-to-right" evidence="2">
        <dbReference type="Rhea" id="RHEA:19670"/>
    </physiologicalReaction>
</comment>
<comment type="subunit">
    <text evidence="2">Monomer.</text>
</comment>
<comment type="subcellular location">
    <subcellularLocation>
        <location evidence="2">Cytoplasm</location>
    </subcellularLocation>
</comment>
<comment type="similarity">
    <text evidence="2">Belongs to the TRAFAC class translation factor GTPase superfamily. Classic translation factor GTPase family. EF-Tu/EF-1A subfamily.</text>
</comment>
<accession>A8EZL8</accession>
<protein>
    <recommendedName>
        <fullName evidence="2">Elongation factor Tu</fullName>
        <shortName evidence="2">EF-Tu</shortName>
        <ecNumber evidence="2">3.6.5.3</ecNumber>
    </recommendedName>
</protein>
<evidence type="ECO:0000250" key="1"/>
<evidence type="ECO:0000255" key="2">
    <source>
        <dbReference type="HAMAP-Rule" id="MF_00118"/>
    </source>
</evidence>
<gene>
    <name evidence="2" type="primary">tuf</name>
    <name type="ordered locus">A1E_04380</name>
</gene>
<reference key="1">
    <citation type="submission" date="2007-09" db="EMBL/GenBank/DDBJ databases">
        <title>Complete genome sequence of Rickettsia canadensis.</title>
        <authorList>
            <person name="Madan A."/>
            <person name="Fahey J."/>
            <person name="Helton E."/>
            <person name="Ketteman M."/>
            <person name="Madan A."/>
            <person name="Rodrigues S."/>
            <person name="Sanchez A."/>
            <person name="Whiting M."/>
            <person name="Dasch G."/>
            <person name="Eremeeva M."/>
        </authorList>
    </citation>
    <scope>NUCLEOTIDE SEQUENCE [LARGE SCALE GENOMIC DNA]</scope>
    <source>
        <strain>McKiel</strain>
    </source>
</reference>
<sequence>MAKAKFERTKPHVNIGTIGHVDHGKTSLTAAITIVLAKTGGAQATAYDQIDAAPEEKERGITISTAHVEYETKNRHYAHVDCPGHADYVKNMITGAAQMDGAILVVSAADGPMPQTREHILLAKQVGVPAMVVFLNKVDMVDDPDLLELVEMEVRELLSKYGFPGDEIPIIKGSALQALEGKPEGEKAINELMDAVDSYIPQPVRATDKPFLMPIEDVFSISGRGTVVTGRVESGIIKVGEEIEIVGLKDTQKTTCTGVEMFRKLLDEGQAGDNIGVLLRGTKREEVERGQVLAKPGSIKPHDKFEAEVYVLSKEEGGRHTPFTNDYRPQFYFRTTDVTGTIKLPADKQMVMPGDNATFTVELIKPIAMQEGLKFSIREGGRTVGAGVVTKINN</sequence>
<name>EFTU_RICCK</name>
<feature type="chain" id="PRO_1000015742" description="Elongation factor Tu">
    <location>
        <begin position="1"/>
        <end position="394"/>
    </location>
</feature>
<feature type="domain" description="tr-type G">
    <location>
        <begin position="10"/>
        <end position="204"/>
    </location>
</feature>
<feature type="region of interest" description="G1" evidence="1">
    <location>
        <begin position="19"/>
        <end position="26"/>
    </location>
</feature>
<feature type="region of interest" description="G2" evidence="1">
    <location>
        <begin position="60"/>
        <end position="64"/>
    </location>
</feature>
<feature type="region of interest" description="G3" evidence="1">
    <location>
        <begin position="81"/>
        <end position="84"/>
    </location>
</feature>
<feature type="region of interest" description="G4" evidence="1">
    <location>
        <begin position="136"/>
        <end position="139"/>
    </location>
</feature>
<feature type="region of interest" description="G5" evidence="1">
    <location>
        <begin position="174"/>
        <end position="176"/>
    </location>
</feature>
<feature type="binding site" evidence="2">
    <location>
        <begin position="19"/>
        <end position="26"/>
    </location>
    <ligand>
        <name>GTP</name>
        <dbReference type="ChEBI" id="CHEBI:37565"/>
    </ligand>
</feature>
<feature type="binding site" evidence="2">
    <location>
        <position position="26"/>
    </location>
    <ligand>
        <name>Mg(2+)</name>
        <dbReference type="ChEBI" id="CHEBI:18420"/>
    </ligand>
</feature>
<feature type="binding site" evidence="2">
    <location>
        <begin position="81"/>
        <end position="85"/>
    </location>
    <ligand>
        <name>GTP</name>
        <dbReference type="ChEBI" id="CHEBI:37565"/>
    </ligand>
</feature>
<feature type="binding site" evidence="2">
    <location>
        <begin position="136"/>
        <end position="139"/>
    </location>
    <ligand>
        <name>GTP</name>
        <dbReference type="ChEBI" id="CHEBI:37565"/>
    </ligand>
</feature>
<organism>
    <name type="scientific">Rickettsia canadensis (strain McKiel)</name>
    <dbReference type="NCBI Taxonomy" id="293613"/>
    <lineage>
        <taxon>Bacteria</taxon>
        <taxon>Pseudomonadati</taxon>
        <taxon>Pseudomonadota</taxon>
        <taxon>Alphaproteobacteria</taxon>
        <taxon>Rickettsiales</taxon>
        <taxon>Rickettsiaceae</taxon>
        <taxon>Rickettsieae</taxon>
        <taxon>Rickettsia</taxon>
        <taxon>belli group</taxon>
    </lineage>
</organism>
<keyword id="KW-0963">Cytoplasm</keyword>
<keyword id="KW-0251">Elongation factor</keyword>
<keyword id="KW-0342">GTP-binding</keyword>
<keyword id="KW-0378">Hydrolase</keyword>
<keyword id="KW-0460">Magnesium</keyword>
<keyword id="KW-0479">Metal-binding</keyword>
<keyword id="KW-0547">Nucleotide-binding</keyword>
<keyword id="KW-0648">Protein biosynthesis</keyword>
<dbReference type="EC" id="3.6.5.3" evidence="2"/>
<dbReference type="EMBL" id="CP000409">
    <property type="protein sequence ID" value="ABV73801.1"/>
    <property type="molecule type" value="Genomic_DNA"/>
</dbReference>
<dbReference type="RefSeq" id="WP_012148996.1">
    <property type="nucleotide sequence ID" value="NC_009879.1"/>
</dbReference>
<dbReference type="SMR" id="A8EZL8"/>
<dbReference type="STRING" id="293613.A1E_04380"/>
<dbReference type="KEGG" id="rcm:A1E_04380"/>
<dbReference type="eggNOG" id="COG0050">
    <property type="taxonomic scope" value="Bacteria"/>
</dbReference>
<dbReference type="HOGENOM" id="CLU_007265_0_0_5"/>
<dbReference type="Proteomes" id="UP000007056">
    <property type="component" value="Chromosome"/>
</dbReference>
<dbReference type="GO" id="GO:0005737">
    <property type="term" value="C:cytoplasm"/>
    <property type="evidence" value="ECO:0007669"/>
    <property type="project" value="UniProtKB-SubCell"/>
</dbReference>
<dbReference type="GO" id="GO:0005525">
    <property type="term" value="F:GTP binding"/>
    <property type="evidence" value="ECO:0007669"/>
    <property type="project" value="UniProtKB-UniRule"/>
</dbReference>
<dbReference type="GO" id="GO:0003924">
    <property type="term" value="F:GTPase activity"/>
    <property type="evidence" value="ECO:0007669"/>
    <property type="project" value="InterPro"/>
</dbReference>
<dbReference type="GO" id="GO:0097216">
    <property type="term" value="F:guanosine tetraphosphate binding"/>
    <property type="evidence" value="ECO:0007669"/>
    <property type="project" value="UniProtKB-ARBA"/>
</dbReference>
<dbReference type="GO" id="GO:0003746">
    <property type="term" value="F:translation elongation factor activity"/>
    <property type="evidence" value="ECO:0007669"/>
    <property type="project" value="UniProtKB-UniRule"/>
</dbReference>
<dbReference type="CDD" id="cd01884">
    <property type="entry name" value="EF_Tu"/>
    <property type="match status" value="1"/>
</dbReference>
<dbReference type="CDD" id="cd03697">
    <property type="entry name" value="EFTU_II"/>
    <property type="match status" value="1"/>
</dbReference>
<dbReference type="CDD" id="cd03707">
    <property type="entry name" value="EFTU_III"/>
    <property type="match status" value="1"/>
</dbReference>
<dbReference type="FunFam" id="2.40.30.10:FF:000001">
    <property type="entry name" value="Elongation factor Tu"/>
    <property type="match status" value="1"/>
</dbReference>
<dbReference type="FunFam" id="3.40.50.300:FF:000003">
    <property type="entry name" value="Elongation factor Tu"/>
    <property type="match status" value="1"/>
</dbReference>
<dbReference type="Gene3D" id="3.40.50.300">
    <property type="entry name" value="P-loop containing nucleotide triphosphate hydrolases"/>
    <property type="match status" value="1"/>
</dbReference>
<dbReference type="Gene3D" id="2.40.30.10">
    <property type="entry name" value="Translation factors"/>
    <property type="match status" value="2"/>
</dbReference>
<dbReference type="HAMAP" id="MF_00118_B">
    <property type="entry name" value="EF_Tu_B"/>
    <property type="match status" value="1"/>
</dbReference>
<dbReference type="InterPro" id="IPR041709">
    <property type="entry name" value="EF-Tu_GTP-bd"/>
</dbReference>
<dbReference type="InterPro" id="IPR050055">
    <property type="entry name" value="EF-Tu_GTPase"/>
</dbReference>
<dbReference type="InterPro" id="IPR004161">
    <property type="entry name" value="EFTu-like_2"/>
</dbReference>
<dbReference type="InterPro" id="IPR033720">
    <property type="entry name" value="EFTU_2"/>
</dbReference>
<dbReference type="InterPro" id="IPR031157">
    <property type="entry name" value="G_TR_CS"/>
</dbReference>
<dbReference type="InterPro" id="IPR027417">
    <property type="entry name" value="P-loop_NTPase"/>
</dbReference>
<dbReference type="InterPro" id="IPR005225">
    <property type="entry name" value="Small_GTP-bd"/>
</dbReference>
<dbReference type="InterPro" id="IPR000795">
    <property type="entry name" value="T_Tr_GTP-bd_dom"/>
</dbReference>
<dbReference type="InterPro" id="IPR009000">
    <property type="entry name" value="Transl_B-barrel_sf"/>
</dbReference>
<dbReference type="InterPro" id="IPR009001">
    <property type="entry name" value="Transl_elong_EF1A/Init_IF2_C"/>
</dbReference>
<dbReference type="InterPro" id="IPR004541">
    <property type="entry name" value="Transl_elong_EFTu/EF1A_bac/org"/>
</dbReference>
<dbReference type="InterPro" id="IPR004160">
    <property type="entry name" value="Transl_elong_EFTu/EF1A_C"/>
</dbReference>
<dbReference type="NCBIfam" id="TIGR00485">
    <property type="entry name" value="EF-Tu"/>
    <property type="match status" value="1"/>
</dbReference>
<dbReference type="NCBIfam" id="NF000766">
    <property type="entry name" value="PRK00049.1"/>
    <property type="match status" value="1"/>
</dbReference>
<dbReference type="NCBIfam" id="NF009372">
    <property type="entry name" value="PRK12735.1"/>
    <property type="match status" value="1"/>
</dbReference>
<dbReference type="NCBIfam" id="NF009373">
    <property type="entry name" value="PRK12736.1"/>
    <property type="match status" value="1"/>
</dbReference>
<dbReference type="NCBIfam" id="TIGR00231">
    <property type="entry name" value="small_GTP"/>
    <property type="match status" value="1"/>
</dbReference>
<dbReference type="PANTHER" id="PTHR43721:SF22">
    <property type="entry name" value="ELONGATION FACTOR TU, MITOCHONDRIAL"/>
    <property type="match status" value="1"/>
</dbReference>
<dbReference type="PANTHER" id="PTHR43721">
    <property type="entry name" value="ELONGATION FACTOR TU-RELATED"/>
    <property type="match status" value="1"/>
</dbReference>
<dbReference type="Pfam" id="PF00009">
    <property type="entry name" value="GTP_EFTU"/>
    <property type="match status" value="1"/>
</dbReference>
<dbReference type="Pfam" id="PF03144">
    <property type="entry name" value="GTP_EFTU_D2"/>
    <property type="match status" value="1"/>
</dbReference>
<dbReference type="Pfam" id="PF03143">
    <property type="entry name" value="GTP_EFTU_D3"/>
    <property type="match status" value="1"/>
</dbReference>
<dbReference type="PRINTS" id="PR00315">
    <property type="entry name" value="ELONGATNFCT"/>
</dbReference>
<dbReference type="SUPFAM" id="SSF50465">
    <property type="entry name" value="EF-Tu/eEF-1alpha/eIF2-gamma C-terminal domain"/>
    <property type="match status" value="1"/>
</dbReference>
<dbReference type="SUPFAM" id="SSF52540">
    <property type="entry name" value="P-loop containing nucleoside triphosphate hydrolases"/>
    <property type="match status" value="1"/>
</dbReference>
<dbReference type="SUPFAM" id="SSF50447">
    <property type="entry name" value="Translation proteins"/>
    <property type="match status" value="1"/>
</dbReference>
<dbReference type="PROSITE" id="PS00301">
    <property type="entry name" value="G_TR_1"/>
    <property type="match status" value="1"/>
</dbReference>
<dbReference type="PROSITE" id="PS51722">
    <property type="entry name" value="G_TR_2"/>
    <property type="match status" value="1"/>
</dbReference>
<proteinExistence type="inferred from homology"/>